<proteinExistence type="inferred from homology"/>
<feature type="chain" id="PRO_0000131523" description="Small ribosomal subunit protein uS5">
    <location>
        <begin position="1"/>
        <end position="166"/>
    </location>
</feature>
<feature type="domain" description="S5 DRBM" evidence="1">
    <location>
        <begin position="11"/>
        <end position="74"/>
    </location>
</feature>
<reference key="1">
    <citation type="journal article" date="1995" name="Science">
        <title>Whole-genome random sequencing and assembly of Haemophilus influenzae Rd.</title>
        <authorList>
            <person name="Fleischmann R.D."/>
            <person name="Adams M.D."/>
            <person name="White O."/>
            <person name="Clayton R.A."/>
            <person name="Kirkness E.F."/>
            <person name="Kerlavage A.R."/>
            <person name="Bult C.J."/>
            <person name="Tomb J.-F."/>
            <person name="Dougherty B.A."/>
            <person name="Merrick J.M."/>
            <person name="McKenney K."/>
            <person name="Sutton G.G."/>
            <person name="FitzHugh W."/>
            <person name="Fields C.A."/>
            <person name="Gocayne J.D."/>
            <person name="Scott J.D."/>
            <person name="Shirley R."/>
            <person name="Liu L.-I."/>
            <person name="Glodek A."/>
            <person name="Kelley J.M."/>
            <person name="Weidman J.F."/>
            <person name="Phillips C.A."/>
            <person name="Spriggs T."/>
            <person name="Hedblom E."/>
            <person name="Cotton M.D."/>
            <person name="Utterback T.R."/>
            <person name="Hanna M.C."/>
            <person name="Nguyen D.T."/>
            <person name="Saudek D.M."/>
            <person name="Brandon R.C."/>
            <person name="Fine L.D."/>
            <person name="Fritchman J.L."/>
            <person name="Fuhrmann J.L."/>
            <person name="Geoghagen N.S.M."/>
            <person name="Gnehm C.L."/>
            <person name="McDonald L.A."/>
            <person name="Small K.V."/>
            <person name="Fraser C.M."/>
            <person name="Smith H.O."/>
            <person name="Venter J.C."/>
        </authorList>
    </citation>
    <scope>NUCLEOTIDE SEQUENCE [LARGE SCALE GENOMIC DNA]</scope>
    <source>
        <strain>ATCC 51907 / DSM 11121 / KW20 / Rd</strain>
    </source>
</reference>
<accession>P44374</accession>
<gene>
    <name evidence="1" type="primary">rpsE</name>
    <name evidence="1" type="synonym">rps5</name>
    <name type="ordered locus">HI_0795</name>
</gene>
<name>RS5_HAEIN</name>
<keyword id="KW-1185">Reference proteome</keyword>
<keyword id="KW-0687">Ribonucleoprotein</keyword>
<keyword id="KW-0689">Ribosomal protein</keyword>
<keyword id="KW-0694">RNA-binding</keyword>
<keyword id="KW-0699">rRNA-binding</keyword>
<sequence length="166" mass="17500">MSNIEKQVGELQEKLIAVNRVSKTVKGGRIMSFTALTVVGDGNGRVGFGYGKAREVPAAIQKAMEKARRNMINVALNEGTLQHPVKGVHTGSRVFMQPASEGTGIIAGGAMRAVLEVAGVRNVLSKAYGSTNPINVVRATIDALANMKSPEMVAAKRGKTVDEILG</sequence>
<comment type="function">
    <text evidence="1">With S4 and S12 plays an important role in translational accuracy.</text>
</comment>
<comment type="function">
    <text evidence="1">Located at the back of the 30S subunit body where it stabilizes the conformation of the head with respect to the body.</text>
</comment>
<comment type="subunit">
    <text evidence="1">Part of the 30S ribosomal subunit. Contacts proteins S4 and S8.</text>
</comment>
<comment type="domain">
    <text>The N-terminal domain interacts with the head of the 30S subunit; the C-terminal domain interacts with the body and contacts protein S4. The interaction surface between S4 and S5 is involved in control of translational fidelity.</text>
</comment>
<comment type="similarity">
    <text evidence="1">Belongs to the universal ribosomal protein uS5 family.</text>
</comment>
<protein>
    <recommendedName>
        <fullName evidence="1">Small ribosomal subunit protein uS5</fullName>
    </recommendedName>
    <alternativeName>
        <fullName evidence="2">30S ribosomal protein S5</fullName>
    </alternativeName>
</protein>
<dbReference type="EMBL" id="L42023">
    <property type="protein sequence ID" value="AAC22453.1"/>
    <property type="molecule type" value="Genomic_DNA"/>
</dbReference>
<dbReference type="PIR" id="D64094">
    <property type="entry name" value="D64094"/>
</dbReference>
<dbReference type="RefSeq" id="NP_438954.1">
    <property type="nucleotide sequence ID" value="NC_000907.1"/>
</dbReference>
<dbReference type="SMR" id="P44374"/>
<dbReference type="STRING" id="71421.HI_0795"/>
<dbReference type="EnsemblBacteria" id="AAC22453">
    <property type="protein sequence ID" value="AAC22453"/>
    <property type="gene ID" value="HI_0795"/>
</dbReference>
<dbReference type="KEGG" id="hin:HI_0795"/>
<dbReference type="PATRIC" id="fig|71421.8.peg.834"/>
<dbReference type="eggNOG" id="COG0098">
    <property type="taxonomic scope" value="Bacteria"/>
</dbReference>
<dbReference type="HOGENOM" id="CLU_065898_2_2_6"/>
<dbReference type="OrthoDB" id="9809045at2"/>
<dbReference type="PhylomeDB" id="P44374"/>
<dbReference type="BioCyc" id="HINF71421:G1GJ1-835-MONOMER"/>
<dbReference type="Proteomes" id="UP000000579">
    <property type="component" value="Chromosome"/>
</dbReference>
<dbReference type="GO" id="GO:0022627">
    <property type="term" value="C:cytosolic small ribosomal subunit"/>
    <property type="evidence" value="ECO:0000318"/>
    <property type="project" value="GO_Central"/>
</dbReference>
<dbReference type="GO" id="GO:0019843">
    <property type="term" value="F:rRNA binding"/>
    <property type="evidence" value="ECO:0007669"/>
    <property type="project" value="UniProtKB-UniRule"/>
</dbReference>
<dbReference type="GO" id="GO:0003735">
    <property type="term" value="F:structural constituent of ribosome"/>
    <property type="evidence" value="ECO:0000318"/>
    <property type="project" value="GO_Central"/>
</dbReference>
<dbReference type="GO" id="GO:0006412">
    <property type="term" value="P:translation"/>
    <property type="evidence" value="ECO:0000318"/>
    <property type="project" value="GO_Central"/>
</dbReference>
<dbReference type="FunFam" id="3.30.160.20:FF:000001">
    <property type="entry name" value="30S ribosomal protein S5"/>
    <property type="match status" value="1"/>
</dbReference>
<dbReference type="FunFam" id="3.30.230.10:FF:000002">
    <property type="entry name" value="30S ribosomal protein S5"/>
    <property type="match status" value="1"/>
</dbReference>
<dbReference type="Gene3D" id="3.30.160.20">
    <property type="match status" value="1"/>
</dbReference>
<dbReference type="Gene3D" id="3.30.230.10">
    <property type="match status" value="1"/>
</dbReference>
<dbReference type="HAMAP" id="MF_01307_B">
    <property type="entry name" value="Ribosomal_uS5_B"/>
    <property type="match status" value="1"/>
</dbReference>
<dbReference type="InterPro" id="IPR020568">
    <property type="entry name" value="Ribosomal_Su5_D2-typ_SF"/>
</dbReference>
<dbReference type="InterPro" id="IPR000851">
    <property type="entry name" value="Ribosomal_uS5"/>
</dbReference>
<dbReference type="InterPro" id="IPR005712">
    <property type="entry name" value="Ribosomal_uS5_bac-type"/>
</dbReference>
<dbReference type="InterPro" id="IPR005324">
    <property type="entry name" value="Ribosomal_uS5_C"/>
</dbReference>
<dbReference type="InterPro" id="IPR013810">
    <property type="entry name" value="Ribosomal_uS5_N"/>
</dbReference>
<dbReference type="InterPro" id="IPR018192">
    <property type="entry name" value="Ribosomal_uS5_N_CS"/>
</dbReference>
<dbReference type="InterPro" id="IPR014721">
    <property type="entry name" value="Ribsml_uS5_D2-typ_fold_subgr"/>
</dbReference>
<dbReference type="NCBIfam" id="TIGR01021">
    <property type="entry name" value="rpsE_bact"/>
    <property type="match status" value="1"/>
</dbReference>
<dbReference type="PANTHER" id="PTHR48277">
    <property type="entry name" value="MITOCHONDRIAL RIBOSOMAL PROTEIN S5"/>
    <property type="match status" value="1"/>
</dbReference>
<dbReference type="PANTHER" id="PTHR48277:SF1">
    <property type="entry name" value="MITOCHONDRIAL RIBOSOMAL PROTEIN S5"/>
    <property type="match status" value="1"/>
</dbReference>
<dbReference type="Pfam" id="PF00333">
    <property type="entry name" value="Ribosomal_S5"/>
    <property type="match status" value="1"/>
</dbReference>
<dbReference type="Pfam" id="PF03719">
    <property type="entry name" value="Ribosomal_S5_C"/>
    <property type="match status" value="1"/>
</dbReference>
<dbReference type="SUPFAM" id="SSF54768">
    <property type="entry name" value="dsRNA-binding domain-like"/>
    <property type="match status" value="1"/>
</dbReference>
<dbReference type="SUPFAM" id="SSF54211">
    <property type="entry name" value="Ribosomal protein S5 domain 2-like"/>
    <property type="match status" value="1"/>
</dbReference>
<dbReference type="PROSITE" id="PS00585">
    <property type="entry name" value="RIBOSOMAL_S5"/>
    <property type="match status" value="1"/>
</dbReference>
<dbReference type="PROSITE" id="PS50881">
    <property type="entry name" value="S5_DSRBD"/>
    <property type="match status" value="1"/>
</dbReference>
<evidence type="ECO:0000255" key="1">
    <source>
        <dbReference type="HAMAP-Rule" id="MF_01307"/>
    </source>
</evidence>
<evidence type="ECO:0000305" key="2"/>
<organism>
    <name type="scientific">Haemophilus influenzae (strain ATCC 51907 / DSM 11121 / KW20 / Rd)</name>
    <dbReference type="NCBI Taxonomy" id="71421"/>
    <lineage>
        <taxon>Bacteria</taxon>
        <taxon>Pseudomonadati</taxon>
        <taxon>Pseudomonadota</taxon>
        <taxon>Gammaproteobacteria</taxon>
        <taxon>Pasteurellales</taxon>
        <taxon>Pasteurellaceae</taxon>
        <taxon>Haemophilus</taxon>
    </lineage>
</organism>